<accession>A0A1L9WN49</accession>
<evidence type="ECO:0000250" key="1">
    <source>
        <dbReference type="UniProtKB" id="A0A075TRC0"/>
    </source>
</evidence>
<evidence type="ECO:0000250" key="2">
    <source>
        <dbReference type="UniProtKB" id="E4QP00"/>
    </source>
</evidence>
<evidence type="ECO:0000269" key="3">
    <source>
    </source>
</evidence>
<evidence type="ECO:0000303" key="4">
    <source>
    </source>
</evidence>
<evidence type="ECO:0000305" key="5"/>
<evidence type="ECO:0000305" key="6">
    <source>
    </source>
</evidence>
<name>ACUG_ASPA1</name>
<dbReference type="EC" id="1.1.-.-" evidence="6"/>
<dbReference type="EMBL" id="KV878982">
    <property type="protein sequence ID" value="OJJ97584.1"/>
    <property type="molecule type" value="Genomic_DNA"/>
</dbReference>
<dbReference type="RefSeq" id="XP_020053924.1">
    <property type="nucleotide sequence ID" value="XM_020205647.1"/>
</dbReference>
<dbReference type="SMR" id="A0A1L9WN49"/>
<dbReference type="STRING" id="690307.A0A1L9WN49"/>
<dbReference type="GeneID" id="30979461"/>
<dbReference type="VEuPathDB" id="FungiDB:ASPACDRAFT_80410"/>
<dbReference type="OMA" id="ATGWDWE"/>
<dbReference type="OrthoDB" id="269227at2759"/>
<dbReference type="Proteomes" id="UP000184546">
    <property type="component" value="Unassembled WGS sequence"/>
</dbReference>
<dbReference type="GO" id="GO:0050660">
    <property type="term" value="F:flavin adenine dinucleotide binding"/>
    <property type="evidence" value="ECO:0007669"/>
    <property type="project" value="InterPro"/>
</dbReference>
<dbReference type="GO" id="GO:0016614">
    <property type="term" value="F:oxidoreductase activity, acting on CH-OH group of donors"/>
    <property type="evidence" value="ECO:0007669"/>
    <property type="project" value="InterPro"/>
</dbReference>
<dbReference type="GO" id="GO:0044550">
    <property type="term" value="P:secondary metabolite biosynthetic process"/>
    <property type="evidence" value="ECO:0007669"/>
    <property type="project" value="UniProtKB-ARBA"/>
</dbReference>
<dbReference type="Gene3D" id="3.50.50.60">
    <property type="entry name" value="FAD/NAD(P)-binding domain"/>
    <property type="match status" value="1"/>
</dbReference>
<dbReference type="Gene3D" id="3.30.560.10">
    <property type="entry name" value="Glucose Oxidase, domain 3"/>
    <property type="match status" value="1"/>
</dbReference>
<dbReference type="InterPro" id="IPR036188">
    <property type="entry name" value="FAD/NAD-bd_sf"/>
</dbReference>
<dbReference type="InterPro" id="IPR012132">
    <property type="entry name" value="GMC_OxRdtase"/>
</dbReference>
<dbReference type="InterPro" id="IPR000172">
    <property type="entry name" value="GMC_OxRdtase_N"/>
</dbReference>
<dbReference type="InterPro" id="IPR007867">
    <property type="entry name" value="GMC_OxRtase_C"/>
</dbReference>
<dbReference type="PANTHER" id="PTHR11552">
    <property type="entry name" value="GLUCOSE-METHANOL-CHOLINE GMC OXIDOREDUCTASE"/>
    <property type="match status" value="1"/>
</dbReference>
<dbReference type="PANTHER" id="PTHR11552:SF123">
    <property type="entry name" value="GMC OXIDOREDUCTASE (AFU_ORTHOLOGUE AFUA_2G01770)-RELATED"/>
    <property type="match status" value="1"/>
</dbReference>
<dbReference type="Pfam" id="PF05199">
    <property type="entry name" value="GMC_oxred_C"/>
    <property type="match status" value="1"/>
</dbReference>
<dbReference type="Pfam" id="PF00732">
    <property type="entry name" value="GMC_oxred_N"/>
    <property type="match status" value="1"/>
</dbReference>
<dbReference type="PIRSF" id="PIRSF000137">
    <property type="entry name" value="Alcohol_oxidase"/>
    <property type="match status" value="1"/>
</dbReference>
<dbReference type="SUPFAM" id="SSF54373">
    <property type="entry name" value="FAD-linked reductases, C-terminal domain"/>
    <property type="match status" value="1"/>
</dbReference>
<dbReference type="SUPFAM" id="SSF51905">
    <property type="entry name" value="FAD/NAD(P)-binding domain"/>
    <property type="match status" value="1"/>
</dbReference>
<dbReference type="PROSITE" id="PS00624">
    <property type="entry name" value="GMC_OXRED_2"/>
    <property type="match status" value="1"/>
</dbReference>
<feature type="chain" id="PRO_0000450424" description="GMC-type oxidoreductase acuG">
    <location>
        <begin position="1"/>
        <end position="521"/>
    </location>
</feature>
<feature type="binding site" evidence="2">
    <location>
        <begin position="14"/>
        <end position="15"/>
    </location>
    <ligand>
        <name>FAD</name>
        <dbReference type="ChEBI" id="CHEBI:57692"/>
    </ligand>
</feature>
<feature type="binding site" evidence="2">
    <location>
        <begin position="34"/>
        <end position="35"/>
    </location>
    <ligand>
        <name>FAD</name>
        <dbReference type="ChEBI" id="CHEBI:57692"/>
    </ligand>
</feature>
<feature type="binding site" evidence="2">
    <location>
        <position position="82"/>
    </location>
    <ligand>
        <name>FAD</name>
        <dbReference type="ChEBI" id="CHEBI:57692"/>
    </ligand>
</feature>
<feature type="binding site" evidence="2">
    <location>
        <begin position="90"/>
        <end position="93"/>
    </location>
    <ligand>
        <name>FAD</name>
        <dbReference type="ChEBI" id="CHEBI:57692"/>
    </ligand>
</feature>
<feature type="binding site" evidence="2">
    <location>
        <position position="492"/>
    </location>
    <ligand>
        <name>FAD</name>
        <dbReference type="ChEBI" id="CHEBI:57692"/>
    </ligand>
</feature>
<feature type="binding site" evidence="2">
    <location>
        <begin position="503"/>
        <end position="504"/>
    </location>
    <ligand>
        <name>FAD</name>
        <dbReference type="ChEBI" id="CHEBI:57692"/>
    </ligand>
</feature>
<protein>
    <recommendedName>
        <fullName evidence="4">GMC-type oxidoreductase acuG</fullName>
        <ecNumber evidence="6">1.1.-.-</ecNumber>
    </recommendedName>
    <alternativeName>
        <fullName evidence="4">Aculin biosynthesis cluster protein G</fullName>
    </alternativeName>
</protein>
<gene>
    <name evidence="4" type="primary">acuG</name>
    <name type="ORF">ASPACDRAFT_80410</name>
</gene>
<sequence length="521" mass="56252">MSKTFEYVICGGGTVGCVLASRLSLAGHSVLLIEAGPEDYNDRIMSPVAAPHLHGTEWEHNLMTTKQPGLGNRSVPNYAGKLLSGSSGINYGLWTRGHSVDYDSWAKAVGDERWNYANMLKYFQKTETQISTTAAARIYPLREPIRNAMVAAGLDYNPDPNGGNPLGFGPFTENWKNALRQPASKAYDLSKATVLTNSVIARVDFDDPKTTATGVTLTDGTQYTATSEVLVTCGALKTPQLLMLSGIGPQQHLAQHNIPIIADLPVGENYHDKISATFFWKLRHPEKGYALGSPRFNKPEFRHGNPIEWVATVPTPHAELIKATQQDQIDSDDPYLQKPRGNVEVMVAYAPIAGGGSEFRLPMDGTHISSPVVLLLPTSRGRITLASADPTADPVLDPGYLDTETDRAAIRAGMRVALRLMETESAKEVIDGETPPPGHEPLTSACSDADLDRRVQIVGSSFFQNGGTAAMGTVVDTQCRVKGVRNLRVCDASVLSVPLAGHYQAPMYALGEAVADMLLAQ</sequence>
<proteinExistence type="inferred from homology"/>
<keyword id="KW-0274">FAD</keyword>
<keyword id="KW-0285">Flavoprotein</keyword>
<keyword id="KW-0560">Oxidoreductase</keyword>
<keyword id="KW-1185">Reference proteome</keyword>
<reference key="1">
    <citation type="journal article" date="2017" name="Genome Biol.">
        <title>Comparative genomics reveals high biological diversity and specific adaptations in the industrially and medically important fungal genus Aspergillus.</title>
        <authorList>
            <person name="de Vries R.P."/>
            <person name="Riley R."/>
            <person name="Wiebenga A."/>
            <person name="Aguilar-Osorio G."/>
            <person name="Amillis S."/>
            <person name="Uchima C.A."/>
            <person name="Anderluh G."/>
            <person name="Asadollahi M."/>
            <person name="Askin M."/>
            <person name="Barry K."/>
            <person name="Battaglia E."/>
            <person name="Bayram O."/>
            <person name="Benocci T."/>
            <person name="Braus-Stromeyer S.A."/>
            <person name="Caldana C."/>
            <person name="Canovas D."/>
            <person name="Cerqueira G.C."/>
            <person name="Chen F."/>
            <person name="Chen W."/>
            <person name="Choi C."/>
            <person name="Clum A."/>
            <person name="Dos Santos R.A."/>
            <person name="Damasio A.R."/>
            <person name="Diallinas G."/>
            <person name="Emri T."/>
            <person name="Fekete E."/>
            <person name="Flipphi M."/>
            <person name="Freyberg S."/>
            <person name="Gallo A."/>
            <person name="Gournas C."/>
            <person name="Habgood R."/>
            <person name="Hainaut M."/>
            <person name="Harispe M.L."/>
            <person name="Henrissat B."/>
            <person name="Hilden K.S."/>
            <person name="Hope R."/>
            <person name="Hossain A."/>
            <person name="Karabika E."/>
            <person name="Karaffa L."/>
            <person name="Karanyi Z."/>
            <person name="Krasevec N."/>
            <person name="Kuo A."/>
            <person name="Kusch H."/>
            <person name="LaButti K."/>
            <person name="Lagendijk E.L."/>
            <person name="Lapidus A."/>
            <person name="Levasseur A."/>
            <person name="Lindquist E."/>
            <person name="Lipzen A."/>
            <person name="Logrieco A.F."/>
            <person name="MacCabe A."/>
            <person name="Maekelae M.R."/>
            <person name="Malavazi I."/>
            <person name="Melin P."/>
            <person name="Meyer V."/>
            <person name="Mielnichuk N."/>
            <person name="Miskei M."/>
            <person name="Molnar A.P."/>
            <person name="Mule G."/>
            <person name="Ngan C.Y."/>
            <person name="Orejas M."/>
            <person name="Orosz E."/>
            <person name="Ouedraogo J.P."/>
            <person name="Overkamp K.M."/>
            <person name="Park H.-S."/>
            <person name="Perrone G."/>
            <person name="Piumi F."/>
            <person name="Punt P.J."/>
            <person name="Ram A.F."/>
            <person name="Ramon A."/>
            <person name="Rauscher S."/>
            <person name="Record E."/>
            <person name="Riano-Pachon D.M."/>
            <person name="Robert V."/>
            <person name="Roehrig J."/>
            <person name="Ruller R."/>
            <person name="Salamov A."/>
            <person name="Salih N.S."/>
            <person name="Samson R.A."/>
            <person name="Sandor E."/>
            <person name="Sanguinetti M."/>
            <person name="Schuetze T."/>
            <person name="Sepcic K."/>
            <person name="Shelest E."/>
            <person name="Sherlock G."/>
            <person name="Sophianopoulou V."/>
            <person name="Squina F.M."/>
            <person name="Sun H."/>
            <person name="Susca A."/>
            <person name="Todd R.B."/>
            <person name="Tsang A."/>
            <person name="Unkles S.E."/>
            <person name="van de Wiele N."/>
            <person name="van Rossen-Uffink D."/>
            <person name="Oliveira J.V."/>
            <person name="Vesth T.C."/>
            <person name="Visser J."/>
            <person name="Yu J.-H."/>
            <person name="Zhou M."/>
            <person name="Andersen M.R."/>
            <person name="Archer D.B."/>
            <person name="Baker S.E."/>
            <person name="Benoit I."/>
            <person name="Brakhage A.A."/>
            <person name="Braus G.H."/>
            <person name="Fischer R."/>
            <person name="Frisvad J.C."/>
            <person name="Goldman G.H."/>
            <person name="Houbraken J."/>
            <person name="Oakley B."/>
            <person name="Pocsi I."/>
            <person name="Scazzocchio C."/>
            <person name="Seiboth B."/>
            <person name="vanKuyk P.A."/>
            <person name="Wortman J."/>
            <person name="Dyer P.S."/>
            <person name="Grigoriev I.V."/>
        </authorList>
    </citation>
    <scope>NUCLEOTIDE SEQUENCE [LARGE SCALE GENOMIC DNA]</scope>
    <source>
        <strain>ATCC 16872 / CBS 172.66 / WB 5094</strain>
    </source>
</reference>
<reference key="2">
    <citation type="journal article" date="2015" name="ChemBioChem">
        <title>Investigation of a 6-MSA Synthase Gene Cluster in Aspergillus aculeatus Reveals 6-MSA-derived Aculinic Acid, Aculins A-B and Epi-Aculin A.</title>
        <authorList>
            <person name="Petersen L.M."/>
            <person name="Holm D.K."/>
            <person name="Gotfredsen C.H."/>
            <person name="Mortensen U.H."/>
            <person name="Larsen T.O."/>
        </authorList>
    </citation>
    <scope>FUNCTION</scope>
    <scope>PATHWAY</scope>
</reference>
<organism>
    <name type="scientific">Aspergillus aculeatus (strain ATCC 16872 / CBS 172.66 / WB 5094)</name>
    <dbReference type="NCBI Taxonomy" id="690307"/>
    <lineage>
        <taxon>Eukaryota</taxon>
        <taxon>Fungi</taxon>
        <taxon>Dikarya</taxon>
        <taxon>Ascomycota</taxon>
        <taxon>Pezizomycotina</taxon>
        <taxon>Eurotiomycetes</taxon>
        <taxon>Eurotiomycetidae</taxon>
        <taxon>Eurotiales</taxon>
        <taxon>Aspergillaceae</taxon>
        <taxon>Aspergillus</taxon>
        <taxon>Aspergillus subgen. Circumdati</taxon>
    </lineage>
</organism>
<comment type="function">
    <text evidence="1 3 6">GMC-type oxidoreductase; part of the gene cluster that mediates the biosynthesis of aculins (PubMed:26374386). The pathway begins with the synthesis of 6-methylsalicylic acid by the polyketide synthase (PKS) acuA via condensation of acetate and malonate units (PubMed:26374386). The 6-methylsalicylic acid decarboxylase acuB then catalyzes the decarboxylation of 6-methylsalicylic acid to yield m-cresol (also known as 3-methylphenol) (Probable). These first reactions occur in the cytosol (By similarity). The intermediate m-cresol is then transported into the endoplasmic reticulum where the cytochrome P450 monooxygenase acuC converts it to m-hydroxybenzyl alcohol, which is further converted to gentisyl alcohol by the cytochrome P450 monooxygenase acuD (Probable). Gentisyl alcohol is further oxidized by the oxidoreductase acuE that probably catalyzes hydroxylation of the aromatic ring (Probable). The aromatic system might then be opened by oxidation through a Baeyer-Villiger type of oxidation, which could be catalyzed by acuF, with the carboxylic acid at C-1 subsequently reduced to an aldehyde by acuG (Probable). Subsequently, a hemiacetal is formed, before the dehydrogenase acuH would reduce the double bond between C-4 and C-6 (Probable). Finally, keto-enol tautomerism results in formation of aculinic acid, which exists as two diastereomers (both R/S configurations at C-1) by non-enzymatic hemiacetal formation (Probable). The carboxypeptidase acuI could be involved in the linking of aculinic acid to an aculene A moiety produced by the aculene biosynthesis cluster and which leads to the production of aculin A (Probable). AcuI may also be involved in the attachment of proline to aculinic acid to form epi-aculins A and B (Probable).</text>
</comment>
<comment type="cofactor">
    <cofactor evidence="2">
        <name>FAD</name>
        <dbReference type="ChEBI" id="CHEBI:57692"/>
    </cofactor>
</comment>
<comment type="pathway">
    <text evidence="6">Secondary metabolite biosynthesis.</text>
</comment>
<comment type="similarity">
    <text evidence="5">Belongs to the GMC oxidoreductase family.</text>
</comment>